<evidence type="ECO:0000255" key="1">
    <source>
        <dbReference type="HAMAP-Rule" id="MF_00636"/>
    </source>
</evidence>
<evidence type="ECO:0000269" key="2">
    <source>
    </source>
</evidence>
<evidence type="ECO:0000269" key="3">
    <source>
    </source>
</evidence>
<evidence type="ECO:0000269" key="4">
    <source>
    </source>
</evidence>
<evidence type="ECO:0000269" key="5">
    <source>
    </source>
</evidence>
<evidence type="ECO:0000269" key="6">
    <source>
    </source>
</evidence>
<evidence type="ECO:0000303" key="7">
    <source>
    </source>
</evidence>
<evidence type="ECO:0000305" key="8"/>
<evidence type="ECO:0000305" key="9">
    <source>
    </source>
</evidence>
<evidence type="ECO:0007829" key="10">
    <source>
        <dbReference type="PDB" id="5O5Q"/>
    </source>
</evidence>
<evidence type="ECO:0007829" key="11">
    <source>
        <dbReference type="PDB" id="5O5S"/>
    </source>
</evidence>
<reference key="1">
    <citation type="journal article" date="1994" name="Microbiology">
        <title>Molecular analysis of the operon which encodes the RNA polymerase sigma factor sigma 54 of Escherichia coli.</title>
        <authorList>
            <person name="Jones D.H.A."/>
            <person name="Franklin C.F.H."/>
            <person name="Thomas C.M."/>
        </authorList>
    </citation>
    <scope>NUCLEOTIDE SEQUENCE [GENOMIC DNA]</scope>
    <source>
        <strain>K12</strain>
    </source>
</reference>
<reference key="2">
    <citation type="journal article" date="1995" name="J. Biol. Chem.">
        <title>Novel proteins of the phosphotransferase system encoded within the rpoN operon of Escherichia coli. Enzyme IIANtr affects growth on organic nitrogen and the conditional lethality of an erats mutant.</title>
        <authorList>
            <person name="Powell B.S."/>
            <person name="Court D.L."/>
            <person name="Inada T."/>
            <person name="Nakamura Y."/>
            <person name="Michotey V."/>
            <person name="Cui X."/>
            <person name="Reizer A."/>
            <person name="Saier M.H. Jr."/>
            <person name="Reizer J."/>
        </authorList>
    </citation>
    <scope>NUCLEOTIDE SEQUENCE [GENOMIC DNA]</scope>
    <source>
        <strain>K12 / W3110 / ATCC 27325 / DSM 5911</strain>
    </source>
</reference>
<reference key="3">
    <citation type="journal article" date="1997" name="Science">
        <title>The complete genome sequence of Escherichia coli K-12.</title>
        <authorList>
            <person name="Blattner F.R."/>
            <person name="Plunkett G. III"/>
            <person name="Bloch C.A."/>
            <person name="Perna N.T."/>
            <person name="Burland V."/>
            <person name="Riley M."/>
            <person name="Collado-Vides J."/>
            <person name="Glasner J.D."/>
            <person name="Rode C.K."/>
            <person name="Mayhew G.F."/>
            <person name="Gregor J."/>
            <person name="Davis N.W."/>
            <person name="Kirkpatrick H.A."/>
            <person name="Goeden M.A."/>
            <person name="Rose D.J."/>
            <person name="Mau B."/>
            <person name="Shao Y."/>
        </authorList>
    </citation>
    <scope>NUCLEOTIDE SEQUENCE [LARGE SCALE GENOMIC DNA]</scope>
    <source>
        <strain>K12 / MG1655 / ATCC 47076</strain>
    </source>
</reference>
<reference key="4">
    <citation type="journal article" date="2006" name="Mol. Syst. Biol.">
        <title>Highly accurate genome sequences of Escherichia coli K-12 strains MG1655 and W3110.</title>
        <authorList>
            <person name="Hayashi K."/>
            <person name="Morooka N."/>
            <person name="Yamamoto Y."/>
            <person name="Fujita K."/>
            <person name="Isono K."/>
            <person name="Choi S."/>
            <person name="Ohtsubo E."/>
            <person name="Baba T."/>
            <person name="Wanner B.L."/>
            <person name="Mori H."/>
            <person name="Horiuchi T."/>
        </authorList>
    </citation>
    <scope>NUCLEOTIDE SEQUENCE [LARGE SCALE GENOMIC DNA]</scope>
    <source>
        <strain>K12 / W3110 / ATCC 27325 / DSM 5911</strain>
    </source>
</reference>
<reference key="5">
    <citation type="journal article" date="2007" name="Mol. Microbiol.">
        <title>Feedback control of glucosamine-6-phosphate synthase GlmS expression depends on the small RNA GlmZ and involves the novel protein YhbJ in Escherichia coli.</title>
        <authorList>
            <person name="Kalamorz F."/>
            <person name="Reichenbach B."/>
            <person name="Maerz W."/>
            <person name="Rak B."/>
            <person name="Goerke B."/>
        </authorList>
    </citation>
    <scope>FUNCTION</scope>
    <scope>DISRUPTION PHENOTYPE</scope>
    <source>
        <strain>K12</strain>
    </source>
</reference>
<reference key="6">
    <citation type="journal article" date="2009" name="J. Bacteriol.">
        <title>Characterization of YvcJ, a conserved P-loop-containing protein, and its implication in competence in Bacillus subtilis.</title>
        <authorList>
            <person name="Luciano J."/>
            <person name="Foulquier E."/>
            <person name="Fantino J.R."/>
            <person name="Galinier A."/>
            <person name="Pompeo F."/>
        </authorList>
    </citation>
    <scope>FUNCTION</scope>
    <scope>NTPASE ACTIVITY</scope>
</reference>
<reference key="7">
    <citation type="journal article" date="2009" name="Mol. Cell. Proteomics">
        <title>Lysine acetylation is a highly abundant and evolutionarily conserved modification in Escherichia coli.</title>
        <authorList>
            <person name="Zhang J."/>
            <person name="Sprung R."/>
            <person name="Pei J."/>
            <person name="Tan X."/>
            <person name="Kim S."/>
            <person name="Zhu H."/>
            <person name="Liu C.F."/>
            <person name="Grishin N.V."/>
            <person name="Zhao Y."/>
        </authorList>
    </citation>
    <scope>ACETYLATION [LARGE SCALE ANALYSIS] AT LYS-251</scope>
    <scope>IDENTIFICATION BY MASS SPECTROMETRY</scope>
    <source>
        <strain>K12 / JW1106</strain>
        <strain>K12 / MG1655 / ATCC 47076</strain>
    </source>
</reference>
<reference key="8">
    <citation type="journal article" date="2013" name="Genes Dev.">
        <title>Targeted decay of a regulatory small RNA by an adaptor protein for RNase E and counteraction by an anti-adaptor RNA.</title>
        <authorList>
            <person name="Gopel Y."/>
            <person name="Papenfort K."/>
            <person name="Reichenbach B."/>
            <person name="Vogel J."/>
            <person name="Gorke B."/>
        </authorList>
    </citation>
    <scope>FUNCTION</scope>
    <scope>INTERACTION WITH GLMY; GLMZ AND RNASE E</scope>
    <scope>RNA-BINDING</scope>
    <scope>MUTAGENESIS OF LYS-270; LYS-281; ARG-282 AND LYS-283</scope>
</reference>
<reference key="9">
    <citation type="journal article" date="2013" name="Acta Crystallogr. F">
        <title>Crystallization and preliminary X-ray diffraction analysis of YhbJ from Escherichia coli, a key protein involved in the GlmYZ sRNA regulatory cascade.</title>
        <authorList>
            <person name="Resch M."/>
            <person name="Gopel Y."/>
            <person name="Gorke B."/>
            <person name="Ficner R."/>
        </authorList>
    </citation>
    <scope>CRYSTALLIZATION</scope>
    <scope>SUBUNIT</scope>
</reference>
<feature type="chain" id="PRO_0000107705" description="RNase adapter protein RapZ">
    <location>
        <begin position="1"/>
        <end position="284"/>
    </location>
</feature>
<feature type="region of interest" description="RNA-binding" evidence="1 9">
    <location>
        <begin position="266"/>
        <end position="284"/>
    </location>
</feature>
<feature type="binding site" evidence="1">
    <location>
        <begin position="8"/>
        <end position="15"/>
    </location>
    <ligand>
        <name>ATP</name>
        <dbReference type="ChEBI" id="CHEBI:30616"/>
    </ligand>
</feature>
<feature type="binding site" evidence="1">
    <location>
        <begin position="56"/>
        <end position="59"/>
    </location>
    <ligand>
        <name>GTP</name>
        <dbReference type="ChEBI" id="CHEBI:37565"/>
    </ligand>
</feature>
<feature type="modified residue" description="N6-acetyllysine" evidence="3">
    <location>
        <position position="251"/>
    </location>
</feature>
<feature type="mutagenesis site" description="Lack of activity. Does not bind GlmY and GlmZ; when associated with A-281; A-282 and A-283." evidence="6">
    <original>K</original>
    <variation>A</variation>
    <location>
        <position position="270"/>
    </location>
</feature>
<feature type="mutagenesis site" description="Lack of activity. Does not bind GlmY and GlmZ; when associated with A-270; A-282 and A-283." evidence="6">
    <original>K</original>
    <variation>A</variation>
    <location>
        <position position="281"/>
    </location>
</feature>
<feature type="mutagenesis site" description="Lack of activity. Does not bind GlmY and GlmZ; when associated with A-270; A-281 and A-283." evidence="6">
    <original>R</original>
    <variation>A</variation>
    <location>
        <position position="282"/>
    </location>
</feature>
<feature type="mutagenesis site" description="Lack of activity. Does not bind GlmY and GlmZ; when associated with A-270; A-281 and A-282." evidence="6">
    <original>K</original>
    <variation>A</variation>
    <location>
        <position position="283"/>
    </location>
</feature>
<feature type="strand" evidence="10">
    <location>
        <begin position="1"/>
        <end position="9"/>
    </location>
</feature>
<feature type="helix" evidence="10">
    <location>
        <begin position="14"/>
        <end position="24"/>
    </location>
</feature>
<feature type="strand" evidence="10">
    <location>
        <begin position="27"/>
        <end position="31"/>
    </location>
</feature>
<feature type="helix" evidence="10">
    <location>
        <begin position="34"/>
        <end position="36"/>
    </location>
</feature>
<feature type="helix" evidence="10">
    <location>
        <begin position="37"/>
        <end position="45"/>
    </location>
</feature>
<feature type="turn" evidence="10">
    <location>
        <begin position="46"/>
        <end position="48"/>
    </location>
</feature>
<feature type="strand" evidence="10">
    <location>
        <begin position="51"/>
        <end position="55"/>
    </location>
</feature>
<feature type="turn" evidence="10">
    <location>
        <begin position="57"/>
        <end position="59"/>
    </location>
</feature>
<feature type="helix" evidence="10">
    <location>
        <begin position="64"/>
        <end position="72"/>
    </location>
</feature>
<feature type="strand" evidence="10">
    <location>
        <begin position="78"/>
        <end position="86"/>
    </location>
</feature>
<feature type="helix" evidence="10">
    <location>
        <begin position="89"/>
        <end position="96"/>
    </location>
</feature>
<feature type="strand" evidence="10">
    <location>
        <begin position="98"/>
        <end position="100"/>
    </location>
</feature>
<feature type="helix" evidence="10">
    <location>
        <begin position="113"/>
        <end position="122"/>
    </location>
</feature>
<feature type="helix" evidence="10">
    <location>
        <begin position="124"/>
        <end position="128"/>
    </location>
</feature>
<feature type="strand" evidence="10">
    <location>
        <begin position="131"/>
        <end position="135"/>
    </location>
</feature>
<feature type="helix" evidence="10">
    <location>
        <begin position="141"/>
        <end position="151"/>
    </location>
</feature>
<feature type="strand" evidence="11">
    <location>
        <begin position="161"/>
        <end position="168"/>
    </location>
</feature>
<feature type="helix" evidence="11">
    <location>
        <begin position="169"/>
        <end position="171"/>
    </location>
</feature>
<feature type="strand" evidence="11">
    <location>
        <begin position="178"/>
        <end position="182"/>
    </location>
</feature>
<feature type="helix" evidence="11">
    <location>
        <begin position="189"/>
        <end position="191"/>
    </location>
</feature>
<feature type="turn" evidence="11">
    <location>
        <begin position="193"/>
        <end position="197"/>
    </location>
</feature>
<feature type="helix" evidence="11">
    <location>
        <begin position="203"/>
        <end position="210"/>
    </location>
</feature>
<feature type="helix" evidence="11">
    <location>
        <begin position="213"/>
        <end position="233"/>
    </location>
</feature>
<feature type="strand" evidence="11">
    <location>
        <begin position="239"/>
        <end position="252"/>
    </location>
</feature>
<feature type="helix" evidence="11">
    <location>
        <begin position="253"/>
        <end position="267"/>
    </location>
</feature>
<feature type="strand" evidence="11">
    <location>
        <begin position="271"/>
        <end position="276"/>
    </location>
</feature>
<feature type="turn" evidence="11">
    <location>
        <begin position="277"/>
        <end position="280"/>
    </location>
</feature>
<name>RAPZ_ECOLI</name>
<accession>P0A894</accession>
<accession>P33995</accession>
<accession>Q2M907</accession>
<comment type="function">
    <text evidence="2 4 6">Modulates the synthesis of GlmS, by affecting the processing and stability of the regulatory small RNA GlmZ. When glucosamine-6-phosphate (GlcN6P) concentrations are high in the cell, RapZ binds GlmZ and targets it to cleavage by RNase E. Consequently, GlmZ is inactivated and unable to activate GlmS synthesis. Under low GlcN6P concentrations, RapZ is sequestered and inactivated by an other regulatory small RNA, GlmY, preventing GlmZ degradation and leading to synthesis of GlmS (PubMed:17824929, PubMed:23475961). Displays ATPase and GTPase activities in vitro. Can also hydrolyze pNPP (PubMed:19074378).</text>
</comment>
<comment type="subunit">
    <text evidence="5 6">Homotrimer (PubMed:23385747). Interacts with the small RNAs GlmY and GlmZ (PubMed:23475961). Interacts with the catalytic domain of RNase E in an RNA-independent manner (PubMed:23475961).</text>
</comment>
<comment type="disruption phenotype">
    <text evidence="2">Cells lacking this gene strongly overproduce the GlmS protein.</text>
</comment>
<comment type="similarity">
    <text evidence="1 8">Belongs to the RapZ-like family. RapZ subfamily.</text>
</comment>
<gene>
    <name evidence="1 7" type="primary">rapZ</name>
    <name type="synonym">yhbJ</name>
    <name type="ordered locus">b3205</name>
    <name type="ordered locus">JW3172</name>
</gene>
<keyword id="KW-0002">3D-structure</keyword>
<keyword id="KW-0007">Acetylation</keyword>
<keyword id="KW-0067">ATP-binding</keyword>
<keyword id="KW-0342">GTP-binding</keyword>
<keyword id="KW-0547">Nucleotide-binding</keyword>
<keyword id="KW-1185">Reference proteome</keyword>
<keyword id="KW-0694">RNA-binding</keyword>
<organism>
    <name type="scientific">Escherichia coli (strain K12)</name>
    <dbReference type="NCBI Taxonomy" id="83333"/>
    <lineage>
        <taxon>Bacteria</taxon>
        <taxon>Pseudomonadati</taxon>
        <taxon>Pseudomonadota</taxon>
        <taxon>Gammaproteobacteria</taxon>
        <taxon>Enterobacterales</taxon>
        <taxon>Enterobacteriaceae</taxon>
        <taxon>Escherichia</taxon>
    </lineage>
</organism>
<dbReference type="EMBL" id="Z27094">
    <property type="protein sequence ID" value="CAA81620.1"/>
    <property type="molecule type" value="Genomic_DNA"/>
</dbReference>
<dbReference type="EMBL" id="U12684">
    <property type="protein sequence ID" value="AAB60166.1"/>
    <property type="molecule type" value="Genomic_DNA"/>
</dbReference>
<dbReference type="EMBL" id="U18997">
    <property type="protein sequence ID" value="AAA58007.1"/>
    <property type="molecule type" value="Genomic_DNA"/>
</dbReference>
<dbReference type="EMBL" id="U00096">
    <property type="protein sequence ID" value="AAC76237.1"/>
    <property type="molecule type" value="Genomic_DNA"/>
</dbReference>
<dbReference type="EMBL" id="AP009048">
    <property type="protein sequence ID" value="BAE77249.1"/>
    <property type="molecule type" value="Genomic_DNA"/>
</dbReference>
<dbReference type="PIR" id="I76721">
    <property type="entry name" value="I76721"/>
</dbReference>
<dbReference type="RefSeq" id="NP_417672.1">
    <property type="nucleotide sequence ID" value="NC_000913.3"/>
</dbReference>
<dbReference type="RefSeq" id="WP_000243741.1">
    <property type="nucleotide sequence ID" value="NZ_STEB01000012.1"/>
</dbReference>
<dbReference type="PDB" id="5O5O">
    <property type="method" value="X-ray"/>
    <property type="resolution" value="3.40 A"/>
    <property type="chains" value="A/B/C/D=1-284"/>
</dbReference>
<dbReference type="PDB" id="5O5Q">
    <property type="method" value="X-ray"/>
    <property type="resolution" value="3.25 A"/>
    <property type="chains" value="A/B/C/D=1-284"/>
</dbReference>
<dbReference type="PDB" id="5O5S">
    <property type="method" value="X-ray"/>
    <property type="resolution" value="1.17 A"/>
    <property type="chains" value="A=154-284"/>
</dbReference>
<dbReference type="PDB" id="8B0I">
    <property type="method" value="EM"/>
    <property type="resolution" value="4.28 A"/>
    <property type="chains" value="A/B/C/D=1-284"/>
</dbReference>
<dbReference type="PDB" id="8B0J">
    <property type="method" value="EM"/>
    <property type="resolution" value="3.99 A"/>
    <property type="chains" value="A/B/C/D=1-284"/>
</dbReference>
<dbReference type="PDBsum" id="5O5O"/>
<dbReference type="PDBsum" id="5O5Q"/>
<dbReference type="PDBsum" id="5O5S"/>
<dbReference type="PDBsum" id="8B0I"/>
<dbReference type="PDBsum" id="8B0J"/>
<dbReference type="EMDB" id="EMD-15784"/>
<dbReference type="EMDB" id="EMD-15785"/>
<dbReference type="SMR" id="P0A894"/>
<dbReference type="BioGRID" id="4259285">
    <property type="interactions" value="40"/>
</dbReference>
<dbReference type="DIP" id="DIP-35927N"/>
<dbReference type="FunCoup" id="P0A894">
    <property type="interactions" value="239"/>
</dbReference>
<dbReference type="IntAct" id="P0A894">
    <property type="interactions" value="15"/>
</dbReference>
<dbReference type="STRING" id="511145.b3205"/>
<dbReference type="iPTMnet" id="P0A894"/>
<dbReference type="jPOST" id="P0A894"/>
<dbReference type="PaxDb" id="511145-b3205"/>
<dbReference type="EnsemblBacteria" id="AAC76237">
    <property type="protein sequence ID" value="AAC76237"/>
    <property type="gene ID" value="b3205"/>
</dbReference>
<dbReference type="GeneID" id="93778776"/>
<dbReference type="GeneID" id="947727"/>
<dbReference type="KEGG" id="ecj:JW3172"/>
<dbReference type="KEGG" id="eco:b3205"/>
<dbReference type="KEGG" id="ecoc:C3026_17440"/>
<dbReference type="PATRIC" id="fig|1411691.4.peg.3526"/>
<dbReference type="EchoBASE" id="EB2066"/>
<dbReference type="eggNOG" id="COG1660">
    <property type="taxonomic scope" value="Bacteria"/>
</dbReference>
<dbReference type="HOGENOM" id="CLU_059558_1_1_6"/>
<dbReference type="InParanoid" id="P0A894"/>
<dbReference type="OMA" id="GFKHGVP"/>
<dbReference type="OrthoDB" id="9784461at2"/>
<dbReference type="PhylomeDB" id="P0A894"/>
<dbReference type="BioCyc" id="EcoCyc:EG12146-MONOMER"/>
<dbReference type="PRO" id="PR:P0A894"/>
<dbReference type="Proteomes" id="UP000000625">
    <property type="component" value="Chromosome"/>
</dbReference>
<dbReference type="GO" id="GO:0032991">
    <property type="term" value="C:protein-containing complex"/>
    <property type="evidence" value="ECO:0000314"/>
    <property type="project" value="EcoCyc"/>
</dbReference>
<dbReference type="GO" id="GO:0005524">
    <property type="term" value="F:ATP binding"/>
    <property type="evidence" value="ECO:0007669"/>
    <property type="project" value="UniProtKB-UniRule"/>
</dbReference>
<dbReference type="GO" id="GO:0097367">
    <property type="term" value="F:carbohydrate derivative binding"/>
    <property type="evidence" value="ECO:0000314"/>
    <property type="project" value="EcoCyc"/>
</dbReference>
<dbReference type="GO" id="GO:0005525">
    <property type="term" value="F:GTP binding"/>
    <property type="evidence" value="ECO:0007669"/>
    <property type="project" value="UniProtKB-UniRule"/>
</dbReference>
<dbReference type="GO" id="GO:0042802">
    <property type="term" value="F:identical protein binding"/>
    <property type="evidence" value="ECO:0000314"/>
    <property type="project" value="EcoCyc"/>
</dbReference>
<dbReference type="GO" id="GO:0060090">
    <property type="term" value="F:molecular adaptor activity"/>
    <property type="evidence" value="ECO:0000314"/>
    <property type="project" value="EcoCyc"/>
</dbReference>
<dbReference type="GO" id="GO:0003723">
    <property type="term" value="F:RNA binding"/>
    <property type="evidence" value="ECO:0000314"/>
    <property type="project" value="EcoCyc"/>
</dbReference>
<dbReference type="GO" id="GO:0051289">
    <property type="term" value="P:protein homotetramerization"/>
    <property type="evidence" value="ECO:0000314"/>
    <property type="project" value="EcoCyc"/>
</dbReference>
<dbReference type="GO" id="GO:0050779">
    <property type="term" value="P:RNA destabilization"/>
    <property type="evidence" value="ECO:0000315"/>
    <property type="project" value="EcoCyc"/>
</dbReference>
<dbReference type="Gene3D" id="3.40.50.300">
    <property type="entry name" value="P-loop containing nucleotide triphosphate hydrolases"/>
    <property type="match status" value="1"/>
</dbReference>
<dbReference type="HAMAP" id="MF_00636">
    <property type="entry name" value="RapZ_like"/>
    <property type="match status" value="1"/>
</dbReference>
<dbReference type="InterPro" id="IPR027417">
    <property type="entry name" value="P-loop_NTPase"/>
</dbReference>
<dbReference type="InterPro" id="IPR005337">
    <property type="entry name" value="RapZ-like"/>
</dbReference>
<dbReference type="InterPro" id="IPR053930">
    <property type="entry name" value="RapZ-like_N"/>
</dbReference>
<dbReference type="InterPro" id="IPR053931">
    <property type="entry name" value="RapZ_C"/>
</dbReference>
<dbReference type="NCBIfam" id="NF003828">
    <property type="entry name" value="PRK05416.1"/>
    <property type="match status" value="1"/>
</dbReference>
<dbReference type="PANTHER" id="PTHR30448">
    <property type="entry name" value="RNASE ADAPTER PROTEIN RAPZ"/>
    <property type="match status" value="1"/>
</dbReference>
<dbReference type="PANTHER" id="PTHR30448:SF0">
    <property type="entry name" value="RNASE ADAPTER PROTEIN RAPZ"/>
    <property type="match status" value="1"/>
</dbReference>
<dbReference type="Pfam" id="PF22740">
    <property type="entry name" value="PapZ_C"/>
    <property type="match status" value="1"/>
</dbReference>
<dbReference type="Pfam" id="PF03668">
    <property type="entry name" value="RapZ-like_N"/>
    <property type="match status" value="1"/>
</dbReference>
<dbReference type="PIRSF" id="PIRSF005052">
    <property type="entry name" value="P-loopkin"/>
    <property type="match status" value="1"/>
</dbReference>
<dbReference type="SUPFAM" id="SSF52540">
    <property type="entry name" value="P-loop containing nucleoside triphosphate hydrolases"/>
    <property type="match status" value="1"/>
</dbReference>
<sequence>MVLMIVSGRSGSGKSVALRALEDMGFYCVDNLPVVLLPDLARTLADREISAAVSIDVRNMPESPEIFEQAMSNLPDAFSPQLLFLDADRNTLIRRYSDTRRLHPLSSKNLSLESAIDKESDLLEPLRSRADLIVDTSEMSVHELAEMLRTRLLGKRERELTMVFESFGFKHGIPIDADYVFDVRFLPNPHWDPKLRPMTGLDKPVAAFLDRHTEVHNFIYQTRSYLELWLPMLETNNRSYLTVAIGCTGGKHRSVYIAEQLADYFRSRGKNVQSRHRTLEKRKP</sequence>
<protein>
    <recommendedName>
        <fullName evidence="1 7">RNase adapter protein RapZ</fullName>
    </recommendedName>
</protein>
<proteinExistence type="evidence at protein level"/>